<evidence type="ECO:0000250" key="1"/>
<evidence type="ECO:0000255" key="2">
    <source>
        <dbReference type="HAMAP-Rule" id="MF_00641"/>
    </source>
</evidence>
<evidence type="ECO:0000256" key="3">
    <source>
        <dbReference type="SAM" id="MobiDB-lite"/>
    </source>
</evidence>
<proteinExistence type="inferred from homology"/>
<name>MASZ_MYCBO</name>
<sequence length="741" mass="80403">MTDRVSVGNLRIARVLYDFVNNEALPGTDIDPDSFWAGVDKVVADLTPQNQALLNARDELQAQIDKWHRRRVIEPIDMDAYRQFLTEIGYLLPEPDDFTITTSGVDAEITTTAGPQLVVPVLNARFALNAANARWGSLYDALYGTDVIPETDGAEKGPTYNKVRGDKVIAYARKFLDDSVPLSSGSFGDATGFTVQDGQLVVALPDKSTGLANPGQFAGYTGAAESPTSVLLINHGLHIEILIDPESQVGTTDRAGVKDVILESAITTIMDFEDSVAAVDAADKVLGYRNWLGLNKGDLAAAVDKDGTAFLRVLNRDRNYTAPGGGQFTLPGRSLMFVRNVGHLMTNDAIVDTDGSEVFEGIMDALFTGLIAIHGLKASDVNGPLINSRTGSIYIVKPKMHGPAEVAFTCELFSRVEDVLGLPQNTMKIGIMDEERRTTVNLKACIKAAADRVVFINTGFLDRTGDEIHTSMEAGPMVRKGTMKSQPWILAYEDHNVDAGLAAGFSGRAQVGKGMWTMTELMADMVETKIAQPRAGASTAWVPSPTAATLHALHYHQVDVAAVQQGLAGKRRATIEQLLTIPLAKELAWAPDEIREEVDNNCQSILGYVVRWVDQGVGCSKVPDIHDVALMEDRATLRISSQLLANWLRHGVITSADVRASLERMAPLVDRQNAGDVAYRPMAPNFDDSIAFLAAQELILSGAQQPNGYTEPILHRRRREFKARAAEKPAPSDRAGDDAAR</sequence>
<keyword id="KW-0963">Cytoplasm</keyword>
<keyword id="KW-0329">Glyoxylate bypass</keyword>
<keyword id="KW-0460">Magnesium</keyword>
<keyword id="KW-0479">Metal-binding</keyword>
<keyword id="KW-0558">Oxidation</keyword>
<keyword id="KW-1185">Reference proteome</keyword>
<keyword id="KW-0808">Transferase</keyword>
<keyword id="KW-0816">Tricarboxylic acid cycle</keyword>
<reference key="1">
    <citation type="journal article" date="2003" name="Proc. Natl. Acad. Sci. U.S.A.">
        <title>The complete genome sequence of Mycobacterium bovis.</title>
        <authorList>
            <person name="Garnier T."/>
            <person name="Eiglmeier K."/>
            <person name="Camus J.-C."/>
            <person name="Medina N."/>
            <person name="Mansoor H."/>
            <person name="Pryor M."/>
            <person name="Duthoy S."/>
            <person name="Grondin S."/>
            <person name="Lacroix C."/>
            <person name="Monsempe C."/>
            <person name="Simon S."/>
            <person name="Harris B."/>
            <person name="Atkin R."/>
            <person name="Doggett J."/>
            <person name="Mayes R."/>
            <person name="Keating L."/>
            <person name="Wheeler P.R."/>
            <person name="Parkhill J."/>
            <person name="Barrell B.G."/>
            <person name="Cole S.T."/>
            <person name="Gordon S.V."/>
            <person name="Hewinson R.G."/>
        </authorList>
    </citation>
    <scope>NUCLEOTIDE SEQUENCE [LARGE SCALE GENOMIC DNA]</scope>
    <source>
        <strain>ATCC BAA-935 / AF2122/97</strain>
    </source>
</reference>
<reference key="2">
    <citation type="journal article" date="2017" name="Genome Announc.">
        <title>Updated reference genome sequence and annotation of Mycobacterium bovis AF2122/97.</title>
        <authorList>
            <person name="Malone K.M."/>
            <person name="Farrell D."/>
            <person name="Stuber T.P."/>
            <person name="Schubert O.T."/>
            <person name="Aebersold R."/>
            <person name="Robbe-Austerman S."/>
            <person name="Gordon S.V."/>
        </authorList>
    </citation>
    <scope>NUCLEOTIDE SEQUENCE [LARGE SCALE GENOMIC DNA]</scope>
    <scope>GENOME REANNOTATION</scope>
    <source>
        <strain>ATCC BAA-935 / AF2122/97</strain>
    </source>
</reference>
<gene>
    <name evidence="2" type="primary">glcB</name>
    <name type="ordered locus">BQ2027_MB1868C</name>
</gene>
<protein>
    <recommendedName>
        <fullName evidence="2">Malate synthase G</fullName>
        <ecNumber evidence="2">2.3.3.9</ecNumber>
    </recommendedName>
</protein>
<feature type="initiator methionine" description="Removed" evidence="1">
    <location>
        <position position="1"/>
    </location>
</feature>
<feature type="chain" id="PRO_0000166890" description="Malate synthase G">
    <location>
        <begin position="2"/>
        <end position="741"/>
    </location>
</feature>
<feature type="region of interest" description="Disordered" evidence="3">
    <location>
        <begin position="718"/>
        <end position="741"/>
    </location>
</feature>
<feature type="compositionally biased region" description="Basic and acidic residues" evidence="3">
    <location>
        <begin position="722"/>
        <end position="741"/>
    </location>
</feature>
<feature type="active site" description="Proton acceptor" evidence="2">
    <location>
        <position position="339"/>
    </location>
</feature>
<feature type="active site" description="Proton donor" evidence="2">
    <location>
        <position position="633"/>
    </location>
</feature>
<feature type="binding site" evidence="2">
    <location>
        <position position="118"/>
    </location>
    <ligand>
        <name>acetyl-CoA</name>
        <dbReference type="ChEBI" id="CHEBI:57288"/>
    </ligand>
</feature>
<feature type="binding site" evidence="2">
    <location>
        <begin position="125"/>
        <end position="126"/>
    </location>
    <ligand>
        <name>acetyl-CoA</name>
        <dbReference type="ChEBI" id="CHEBI:57288"/>
    </ligand>
</feature>
<feature type="binding site" evidence="2">
    <location>
        <position position="275"/>
    </location>
    <ligand>
        <name>acetyl-CoA</name>
        <dbReference type="ChEBI" id="CHEBI:57288"/>
    </ligand>
</feature>
<feature type="binding site" evidence="2">
    <location>
        <position position="312"/>
    </location>
    <ligand>
        <name>acetyl-CoA</name>
        <dbReference type="ChEBI" id="CHEBI:57288"/>
    </ligand>
</feature>
<feature type="binding site" evidence="2">
    <location>
        <position position="339"/>
    </location>
    <ligand>
        <name>glyoxylate</name>
        <dbReference type="ChEBI" id="CHEBI:36655"/>
    </ligand>
</feature>
<feature type="binding site" evidence="2">
    <location>
        <position position="434"/>
    </location>
    <ligand>
        <name>glyoxylate</name>
        <dbReference type="ChEBI" id="CHEBI:36655"/>
    </ligand>
</feature>
<feature type="binding site" evidence="2">
    <location>
        <position position="434"/>
    </location>
    <ligand>
        <name>Mg(2+)</name>
        <dbReference type="ChEBI" id="CHEBI:18420"/>
    </ligand>
</feature>
<feature type="binding site" evidence="2">
    <location>
        <begin position="459"/>
        <end position="462"/>
    </location>
    <ligand>
        <name>glyoxylate</name>
        <dbReference type="ChEBI" id="CHEBI:36655"/>
    </ligand>
</feature>
<feature type="binding site" evidence="2">
    <location>
        <position position="462"/>
    </location>
    <ligand>
        <name>Mg(2+)</name>
        <dbReference type="ChEBI" id="CHEBI:18420"/>
    </ligand>
</feature>
<feature type="binding site" evidence="2">
    <location>
        <position position="543"/>
    </location>
    <ligand>
        <name>acetyl-CoA</name>
        <dbReference type="ChEBI" id="CHEBI:57288"/>
    </ligand>
</feature>
<feature type="modified residue" description="Cysteine sulfenic acid (-SOH)" evidence="2">
    <location>
        <position position="619"/>
    </location>
</feature>
<comment type="function">
    <text evidence="2">Involved in the glycolate utilization. Catalyzes the condensation and subsequent hydrolysis of acetyl-coenzyme A (acetyl-CoA) and glyoxylate to form malate and CoA.</text>
</comment>
<comment type="catalytic activity">
    <reaction evidence="2">
        <text>glyoxylate + acetyl-CoA + H2O = (S)-malate + CoA + H(+)</text>
        <dbReference type="Rhea" id="RHEA:18181"/>
        <dbReference type="ChEBI" id="CHEBI:15377"/>
        <dbReference type="ChEBI" id="CHEBI:15378"/>
        <dbReference type="ChEBI" id="CHEBI:15589"/>
        <dbReference type="ChEBI" id="CHEBI:36655"/>
        <dbReference type="ChEBI" id="CHEBI:57287"/>
        <dbReference type="ChEBI" id="CHEBI:57288"/>
        <dbReference type="EC" id="2.3.3.9"/>
    </reaction>
</comment>
<comment type="cofactor">
    <cofactor evidence="2">
        <name>Mg(2+)</name>
        <dbReference type="ChEBI" id="CHEBI:18420"/>
    </cofactor>
</comment>
<comment type="pathway">
    <text evidence="2">Carbohydrate metabolism; glyoxylate cycle; (S)-malate from isocitrate: step 2/2.</text>
</comment>
<comment type="subunit">
    <text evidence="2">Monomer.</text>
</comment>
<comment type="subcellular location">
    <subcellularLocation>
        <location evidence="2">Cytoplasm</location>
    </subcellularLocation>
</comment>
<comment type="similarity">
    <text evidence="2">Belongs to the malate synthase family. GlcB subfamily.</text>
</comment>
<organism>
    <name type="scientific">Mycobacterium bovis (strain ATCC BAA-935 / AF2122/97)</name>
    <dbReference type="NCBI Taxonomy" id="233413"/>
    <lineage>
        <taxon>Bacteria</taxon>
        <taxon>Bacillati</taxon>
        <taxon>Actinomycetota</taxon>
        <taxon>Actinomycetes</taxon>
        <taxon>Mycobacteriales</taxon>
        <taxon>Mycobacteriaceae</taxon>
        <taxon>Mycobacterium</taxon>
        <taxon>Mycobacterium tuberculosis complex</taxon>
    </lineage>
</organism>
<dbReference type="EC" id="2.3.3.9" evidence="2"/>
<dbReference type="EMBL" id="LT708304">
    <property type="protein sequence ID" value="SIU00472.1"/>
    <property type="molecule type" value="Genomic_DNA"/>
</dbReference>
<dbReference type="RefSeq" id="NP_855520.1">
    <property type="nucleotide sequence ID" value="NC_002945.3"/>
</dbReference>
<dbReference type="RefSeq" id="WP_003409271.1">
    <property type="nucleotide sequence ID" value="NC_002945.4"/>
</dbReference>
<dbReference type="SMR" id="P0A5J5"/>
<dbReference type="KEGG" id="mbo:BQ2027_MB1868C"/>
<dbReference type="PATRIC" id="fig|233413.5.peg.2048"/>
<dbReference type="UniPathway" id="UPA00703">
    <property type="reaction ID" value="UER00720"/>
</dbReference>
<dbReference type="Proteomes" id="UP000001419">
    <property type="component" value="Chromosome"/>
</dbReference>
<dbReference type="GO" id="GO:0005829">
    <property type="term" value="C:cytosol"/>
    <property type="evidence" value="ECO:0007669"/>
    <property type="project" value="TreeGrafter"/>
</dbReference>
<dbReference type="GO" id="GO:0000287">
    <property type="term" value="F:magnesium ion binding"/>
    <property type="evidence" value="ECO:0007669"/>
    <property type="project" value="TreeGrafter"/>
</dbReference>
<dbReference type="GO" id="GO:0004474">
    <property type="term" value="F:malate synthase activity"/>
    <property type="evidence" value="ECO:0007669"/>
    <property type="project" value="UniProtKB-UniRule"/>
</dbReference>
<dbReference type="GO" id="GO:0009436">
    <property type="term" value="P:glyoxylate catabolic process"/>
    <property type="evidence" value="ECO:0007669"/>
    <property type="project" value="TreeGrafter"/>
</dbReference>
<dbReference type="GO" id="GO:0006097">
    <property type="term" value="P:glyoxylate cycle"/>
    <property type="evidence" value="ECO:0007669"/>
    <property type="project" value="UniProtKB-UniRule"/>
</dbReference>
<dbReference type="GO" id="GO:0006099">
    <property type="term" value="P:tricarboxylic acid cycle"/>
    <property type="evidence" value="ECO:0007669"/>
    <property type="project" value="UniProtKB-KW"/>
</dbReference>
<dbReference type="CDD" id="cd00728">
    <property type="entry name" value="malate_synt_G"/>
    <property type="match status" value="1"/>
</dbReference>
<dbReference type="FunFam" id="3.20.20.360:FF:000002">
    <property type="entry name" value="Malate synthase G"/>
    <property type="match status" value="1"/>
</dbReference>
<dbReference type="Gene3D" id="3.20.20.360">
    <property type="entry name" value="Malate synthase, domain 3"/>
    <property type="match status" value="2"/>
</dbReference>
<dbReference type="Gene3D" id="1.20.1220.12">
    <property type="entry name" value="Malate synthase, domain III"/>
    <property type="match status" value="1"/>
</dbReference>
<dbReference type="HAMAP" id="MF_00641">
    <property type="entry name" value="Malate_synth_G"/>
    <property type="match status" value="1"/>
</dbReference>
<dbReference type="InterPro" id="IPR044856">
    <property type="entry name" value="Malate_synth_C_sf"/>
</dbReference>
<dbReference type="InterPro" id="IPR011076">
    <property type="entry name" value="Malate_synth_sf"/>
</dbReference>
<dbReference type="InterPro" id="IPR001465">
    <property type="entry name" value="Malate_synthase_TIM"/>
</dbReference>
<dbReference type="InterPro" id="IPR006253">
    <property type="entry name" value="Malate_synthG"/>
</dbReference>
<dbReference type="InterPro" id="IPR048355">
    <property type="entry name" value="MS_C"/>
</dbReference>
<dbReference type="InterPro" id="IPR048356">
    <property type="entry name" value="MS_N"/>
</dbReference>
<dbReference type="InterPro" id="IPR046363">
    <property type="entry name" value="MS_N_TIM-barrel_dom"/>
</dbReference>
<dbReference type="InterPro" id="IPR048357">
    <property type="entry name" value="MSG_insertion"/>
</dbReference>
<dbReference type="NCBIfam" id="TIGR01345">
    <property type="entry name" value="malate_syn_G"/>
    <property type="match status" value="1"/>
</dbReference>
<dbReference type="NCBIfam" id="NF002825">
    <property type="entry name" value="PRK02999.1"/>
    <property type="match status" value="1"/>
</dbReference>
<dbReference type="PANTHER" id="PTHR42739">
    <property type="entry name" value="MALATE SYNTHASE G"/>
    <property type="match status" value="1"/>
</dbReference>
<dbReference type="PANTHER" id="PTHR42739:SF1">
    <property type="entry name" value="MALATE SYNTHASE G"/>
    <property type="match status" value="1"/>
</dbReference>
<dbReference type="Pfam" id="PF20659">
    <property type="entry name" value="MS_C"/>
    <property type="match status" value="1"/>
</dbReference>
<dbReference type="Pfam" id="PF20656">
    <property type="entry name" value="MS_N"/>
    <property type="match status" value="1"/>
</dbReference>
<dbReference type="Pfam" id="PF01274">
    <property type="entry name" value="MS_TIM-barrel"/>
    <property type="match status" value="1"/>
</dbReference>
<dbReference type="Pfam" id="PF20658">
    <property type="entry name" value="MSG_insertion"/>
    <property type="match status" value="1"/>
</dbReference>
<dbReference type="SUPFAM" id="SSF51645">
    <property type="entry name" value="Malate synthase G"/>
    <property type="match status" value="1"/>
</dbReference>
<accession>P0A5J5</accession>
<accession>A0A1R3XZF6</accession>
<accession>Q50596</accession>
<accession>X2BIM5</accession>